<comment type="function">
    <text evidence="1">Part of the Tol-Pal system, which plays a role in outer membrane invagination during cell division and is important for maintaining outer membrane integrity.</text>
</comment>
<comment type="subunit">
    <text evidence="1">The Tol-Pal system is composed of five core proteins: the inner membrane proteins TolA, TolQ and TolR, the periplasmic protein TolB and the outer membrane protein Pal. They form a network linking the inner and outer membranes and the peptidoglycan layer.</text>
</comment>
<comment type="subcellular location">
    <subcellularLocation>
        <location evidence="1">Periplasm</location>
    </subcellularLocation>
</comment>
<comment type="similarity">
    <text evidence="1">Belongs to the TolB family.</text>
</comment>
<sequence>MMRNVWKSGLRRSAWIGLLMVLCVGVARAQLYVEIAGAGSSQYPIAIANFQGESQIPQDITAIVRADLVHSGRFSNVDVAGAVVPDSPAPDLGAWKSRGAAAFVGGTVTRNGDRYEIRFRLYDTAKGESLGGLALTRGEGQLRLAAHEIADYIYQKLIGDRGVFATRLSYVSKVGRRYQLQISDSDGANPQVALTSNEPIISPAWSPDGTKVAYVSFESRKPVVYVHDLISGRRAVISNQKGNNSAPAWSPDGRRVAVALSRDGNTQIYQVNADGSGLRRLTRSSAIDTEPSFSPDGRSIYFTSDRGGAPQIYRMPTEGEDAGSAQRVTFKGGYNTSPRVSPDGKLLAYISRVGGAFKLYVQDLSNGDVTGLTDTSYDESPSFAANGKFILYATRVGGRSVLAAVSTDGRTRQILSLQAGTVREPAWGPFMQ</sequence>
<gene>
    <name evidence="1" type="primary">tolB</name>
    <name type="ordered locus">RSc0735</name>
    <name type="ORF">RS05118</name>
</gene>
<reference key="1">
    <citation type="journal article" date="2002" name="Nature">
        <title>Genome sequence of the plant pathogen Ralstonia solanacearum.</title>
        <authorList>
            <person name="Salanoubat M."/>
            <person name="Genin S."/>
            <person name="Artiguenave F."/>
            <person name="Gouzy J."/>
            <person name="Mangenot S."/>
            <person name="Arlat M."/>
            <person name="Billault A."/>
            <person name="Brottier P."/>
            <person name="Camus J.-C."/>
            <person name="Cattolico L."/>
            <person name="Chandler M."/>
            <person name="Choisne N."/>
            <person name="Claudel-Renard C."/>
            <person name="Cunnac S."/>
            <person name="Demange N."/>
            <person name="Gaspin C."/>
            <person name="Lavie M."/>
            <person name="Moisan A."/>
            <person name="Robert C."/>
            <person name="Saurin W."/>
            <person name="Schiex T."/>
            <person name="Siguier P."/>
            <person name="Thebault P."/>
            <person name="Whalen M."/>
            <person name="Wincker P."/>
            <person name="Levy M."/>
            <person name="Weissenbach J."/>
            <person name="Boucher C.A."/>
        </authorList>
    </citation>
    <scope>NUCLEOTIDE SEQUENCE [LARGE SCALE GENOMIC DNA]</scope>
    <source>
        <strain>ATCC BAA-1114 / GMI1000</strain>
    </source>
</reference>
<dbReference type="EMBL" id="AL646052">
    <property type="protein sequence ID" value="CAD14265.1"/>
    <property type="molecule type" value="Genomic_DNA"/>
</dbReference>
<dbReference type="SMR" id="Q8Y1F5"/>
<dbReference type="STRING" id="267608.RSc0735"/>
<dbReference type="EnsemblBacteria" id="CAD14265">
    <property type="protein sequence ID" value="CAD14265"/>
    <property type="gene ID" value="RSc0735"/>
</dbReference>
<dbReference type="KEGG" id="rso:RSc0735"/>
<dbReference type="eggNOG" id="COG0823">
    <property type="taxonomic scope" value="Bacteria"/>
</dbReference>
<dbReference type="HOGENOM" id="CLU_047123_0_0_4"/>
<dbReference type="Proteomes" id="UP000001436">
    <property type="component" value="Chromosome"/>
</dbReference>
<dbReference type="GO" id="GO:0042597">
    <property type="term" value="C:periplasmic space"/>
    <property type="evidence" value="ECO:0007669"/>
    <property type="project" value="UniProtKB-SubCell"/>
</dbReference>
<dbReference type="GO" id="GO:0051301">
    <property type="term" value="P:cell division"/>
    <property type="evidence" value="ECO:0007669"/>
    <property type="project" value="UniProtKB-UniRule"/>
</dbReference>
<dbReference type="GO" id="GO:0017038">
    <property type="term" value="P:protein import"/>
    <property type="evidence" value="ECO:0007669"/>
    <property type="project" value="InterPro"/>
</dbReference>
<dbReference type="Gene3D" id="2.120.10.30">
    <property type="entry name" value="TolB, C-terminal domain"/>
    <property type="match status" value="1"/>
</dbReference>
<dbReference type="Gene3D" id="3.40.50.10070">
    <property type="entry name" value="TolB, N-terminal domain"/>
    <property type="match status" value="1"/>
</dbReference>
<dbReference type="HAMAP" id="MF_00671">
    <property type="entry name" value="TolB"/>
    <property type="match status" value="1"/>
</dbReference>
<dbReference type="InterPro" id="IPR011042">
    <property type="entry name" value="6-blade_b-propeller_TolB-like"/>
</dbReference>
<dbReference type="InterPro" id="IPR011659">
    <property type="entry name" value="PD40"/>
</dbReference>
<dbReference type="InterPro" id="IPR014167">
    <property type="entry name" value="Tol-Pal_TolB"/>
</dbReference>
<dbReference type="InterPro" id="IPR007195">
    <property type="entry name" value="TolB_N"/>
</dbReference>
<dbReference type="NCBIfam" id="TIGR02800">
    <property type="entry name" value="propeller_TolB"/>
    <property type="match status" value="1"/>
</dbReference>
<dbReference type="PANTHER" id="PTHR36842:SF1">
    <property type="entry name" value="PROTEIN TOLB"/>
    <property type="match status" value="1"/>
</dbReference>
<dbReference type="PANTHER" id="PTHR36842">
    <property type="entry name" value="PROTEIN TOLB HOMOLOG"/>
    <property type="match status" value="1"/>
</dbReference>
<dbReference type="Pfam" id="PF07676">
    <property type="entry name" value="PD40"/>
    <property type="match status" value="5"/>
</dbReference>
<dbReference type="Pfam" id="PF04052">
    <property type="entry name" value="TolB_N"/>
    <property type="match status" value="1"/>
</dbReference>
<dbReference type="SUPFAM" id="SSF52964">
    <property type="entry name" value="TolB, N-terminal domain"/>
    <property type="match status" value="1"/>
</dbReference>
<dbReference type="SUPFAM" id="SSF69304">
    <property type="entry name" value="Tricorn protease N-terminal domain"/>
    <property type="match status" value="1"/>
</dbReference>
<accession>Q8Y1F5</accession>
<name>TOLB_RALN1</name>
<feature type="signal peptide" evidence="1">
    <location>
        <begin position="1"/>
        <end position="29"/>
    </location>
</feature>
<feature type="chain" id="PRO_0000034676" description="Tol-Pal system protein TolB" evidence="1">
    <location>
        <begin position="30"/>
        <end position="432"/>
    </location>
</feature>
<evidence type="ECO:0000255" key="1">
    <source>
        <dbReference type="HAMAP-Rule" id="MF_00671"/>
    </source>
</evidence>
<keyword id="KW-0131">Cell cycle</keyword>
<keyword id="KW-0132">Cell division</keyword>
<keyword id="KW-0574">Periplasm</keyword>
<keyword id="KW-1185">Reference proteome</keyword>
<keyword id="KW-0732">Signal</keyword>
<organism>
    <name type="scientific">Ralstonia nicotianae (strain ATCC BAA-1114 / GMI1000)</name>
    <name type="common">Ralstonia solanacearum</name>
    <dbReference type="NCBI Taxonomy" id="267608"/>
    <lineage>
        <taxon>Bacteria</taxon>
        <taxon>Pseudomonadati</taxon>
        <taxon>Pseudomonadota</taxon>
        <taxon>Betaproteobacteria</taxon>
        <taxon>Burkholderiales</taxon>
        <taxon>Burkholderiaceae</taxon>
        <taxon>Ralstonia</taxon>
        <taxon>Ralstonia solanacearum species complex</taxon>
    </lineage>
</organism>
<protein>
    <recommendedName>
        <fullName evidence="1">Tol-Pal system protein TolB</fullName>
    </recommendedName>
</protein>
<proteinExistence type="inferred from homology"/>